<comment type="function">
    <text evidence="1">Splits dipeptides with a prolyl residue in the C-terminal position.</text>
</comment>
<comment type="catalytic activity">
    <reaction evidence="1">
        <text>Xaa-L-Pro dipeptide + H2O = an L-alpha-amino acid + L-proline</text>
        <dbReference type="Rhea" id="RHEA:76407"/>
        <dbReference type="ChEBI" id="CHEBI:15377"/>
        <dbReference type="ChEBI" id="CHEBI:59869"/>
        <dbReference type="ChEBI" id="CHEBI:60039"/>
        <dbReference type="ChEBI" id="CHEBI:195196"/>
        <dbReference type="EC" id="3.4.13.9"/>
    </reaction>
</comment>
<comment type="cofactor">
    <cofactor evidence="1">
        <name>Mn(2+)</name>
        <dbReference type="ChEBI" id="CHEBI:29035"/>
    </cofactor>
    <text evidence="1">Binds 2 manganese ions per subunit.</text>
</comment>
<comment type="similarity">
    <text evidence="1">Belongs to the peptidase M24B family. Bacterial-type prolidase subfamily.</text>
</comment>
<feature type="chain" id="PRO_1000140318" description="Xaa-Pro dipeptidase">
    <location>
        <begin position="1"/>
        <end position="443"/>
    </location>
</feature>
<feature type="binding site" evidence="1">
    <location>
        <position position="246"/>
    </location>
    <ligand>
        <name>Mn(2+)</name>
        <dbReference type="ChEBI" id="CHEBI:29035"/>
        <label>2</label>
    </ligand>
</feature>
<feature type="binding site" evidence="1">
    <location>
        <position position="257"/>
    </location>
    <ligand>
        <name>Mn(2+)</name>
        <dbReference type="ChEBI" id="CHEBI:29035"/>
        <label>1</label>
    </ligand>
</feature>
<feature type="binding site" evidence="1">
    <location>
        <position position="257"/>
    </location>
    <ligand>
        <name>Mn(2+)</name>
        <dbReference type="ChEBI" id="CHEBI:29035"/>
        <label>2</label>
    </ligand>
</feature>
<feature type="binding site" evidence="1">
    <location>
        <position position="339"/>
    </location>
    <ligand>
        <name>Mn(2+)</name>
        <dbReference type="ChEBI" id="CHEBI:29035"/>
        <label>1</label>
    </ligand>
</feature>
<feature type="binding site" evidence="1">
    <location>
        <position position="384"/>
    </location>
    <ligand>
        <name>Mn(2+)</name>
        <dbReference type="ChEBI" id="CHEBI:29035"/>
        <label>1</label>
    </ligand>
</feature>
<feature type="binding site" evidence="1">
    <location>
        <position position="423"/>
    </location>
    <ligand>
        <name>Mn(2+)</name>
        <dbReference type="ChEBI" id="CHEBI:29035"/>
        <label>1</label>
    </ligand>
</feature>
<feature type="binding site" evidence="1">
    <location>
        <position position="423"/>
    </location>
    <ligand>
        <name>Mn(2+)</name>
        <dbReference type="ChEBI" id="CHEBI:29035"/>
        <label>2</label>
    </ligand>
</feature>
<accession>B1LM33</accession>
<dbReference type="EC" id="3.4.13.9" evidence="1"/>
<dbReference type="EMBL" id="CP000970">
    <property type="protein sequence ID" value="ACB19300.1"/>
    <property type="molecule type" value="Genomic_DNA"/>
</dbReference>
<dbReference type="RefSeq" id="WP_000444545.1">
    <property type="nucleotide sequence ID" value="NC_010498.1"/>
</dbReference>
<dbReference type="SMR" id="B1LM33"/>
<dbReference type="MEROPS" id="M24.003"/>
<dbReference type="KEGG" id="ecm:EcSMS35_4228"/>
<dbReference type="HOGENOM" id="CLU_050675_0_0_6"/>
<dbReference type="Proteomes" id="UP000007011">
    <property type="component" value="Chromosome"/>
</dbReference>
<dbReference type="GO" id="GO:0005829">
    <property type="term" value="C:cytosol"/>
    <property type="evidence" value="ECO:0007669"/>
    <property type="project" value="TreeGrafter"/>
</dbReference>
<dbReference type="GO" id="GO:0004177">
    <property type="term" value="F:aminopeptidase activity"/>
    <property type="evidence" value="ECO:0007669"/>
    <property type="project" value="TreeGrafter"/>
</dbReference>
<dbReference type="GO" id="GO:0046872">
    <property type="term" value="F:metal ion binding"/>
    <property type="evidence" value="ECO:0007669"/>
    <property type="project" value="UniProtKB-KW"/>
</dbReference>
<dbReference type="GO" id="GO:0008235">
    <property type="term" value="F:metalloexopeptidase activity"/>
    <property type="evidence" value="ECO:0007669"/>
    <property type="project" value="UniProtKB-UniRule"/>
</dbReference>
<dbReference type="GO" id="GO:0016795">
    <property type="term" value="F:phosphoric triester hydrolase activity"/>
    <property type="evidence" value="ECO:0007669"/>
    <property type="project" value="InterPro"/>
</dbReference>
<dbReference type="GO" id="GO:0102009">
    <property type="term" value="F:proline dipeptidase activity"/>
    <property type="evidence" value="ECO:0007669"/>
    <property type="project" value="UniProtKB-EC"/>
</dbReference>
<dbReference type="GO" id="GO:0006508">
    <property type="term" value="P:proteolysis"/>
    <property type="evidence" value="ECO:0007669"/>
    <property type="project" value="UniProtKB-KW"/>
</dbReference>
<dbReference type="CDD" id="cd01087">
    <property type="entry name" value="Prolidase"/>
    <property type="match status" value="1"/>
</dbReference>
<dbReference type="FunFam" id="3.40.350.10:FF:000002">
    <property type="entry name" value="Xaa-Pro dipeptidase"/>
    <property type="match status" value="1"/>
</dbReference>
<dbReference type="FunFam" id="3.90.230.10:FF:000006">
    <property type="entry name" value="Xaa-Pro dipeptidase"/>
    <property type="match status" value="1"/>
</dbReference>
<dbReference type="Gene3D" id="3.90.230.10">
    <property type="entry name" value="Creatinase/methionine aminopeptidase superfamily"/>
    <property type="match status" value="1"/>
</dbReference>
<dbReference type="Gene3D" id="3.40.350.10">
    <property type="entry name" value="Creatinase/prolidase N-terminal domain"/>
    <property type="match status" value="1"/>
</dbReference>
<dbReference type="HAMAP" id="MF_01279">
    <property type="entry name" value="X_Pro_dipeptid"/>
    <property type="match status" value="1"/>
</dbReference>
<dbReference type="InterPro" id="IPR029149">
    <property type="entry name" value="Creatin/AminoP/Spt16_N"/>
</dbReference>
<dbReference type="InterPro" id="IPR036005">
    <property type="entry name" value="Creatinase/aminopeptidase-like"/>
</dbReference>
<dbReference type="InterPro" id="IPR048819">
    <property type="entry name" value="PepQ_N"/>
</dbReference>
<dbReference type="InterPro" id="IPR000994">
    <property type="entry name" value="Pept_M24"/>
</dbReference>
<dbReference type="InterPro" id="IPR001131">
    <property type="entry name" value="Peptidase_M24B_aminopep-P_CS"/>
</dbReference>
<dbReference type="InterPro" id="IPR052433">
    <property type="entry name" value="X-Pro_dipept-like"/>
</dbReference>
<dbReference type="InterPro" id="IPR022846">
    <property type="entry name" value="X_Pro_dipept"/>
</dbReference>
<dbReference type="NCBIfam" id="NF010133">
    <property type="entry name" value="PRK13607.1"/>
    <property type="match status" value="1"/>
</dbReference>
<dbReference type="PANTHER" id="PTHR43226">
    <property type="entry name" value="XAA-PRO AMINOPEPTIDASE 3"/>
    <property type="match status" value="1"/>
</dbReference>
<dbReference type="PANTHER" id="PTHR43226:SF8">
    <property type="entry name" value="XAA-PRO DIPEPTIDASE"/>
    <property type="match status" value="1"/>
</dbReference>
<dbReference type="Pfam" id="PF21216">
    <property type="entry name" value="PepQ_N"/>
    <property type="match status" value="1"/>
</dbReference>
<dbReference type="Pfam" id="PF00557">
    <property type="entry name" value="Peptidase_M24"/>
    <property type="match status" value="1"/>
</dbReference>
<dbReference type="SUPFAM" id="SSF55920">
    <property type="entry name" value="Creatinase/aminopeptidase"/>
    <property type="match status" value="1"/>
</dbReference>
<dbReference type="PROSITE" id="PS00491">
    <property type="entry name" value="PROLINE_PEPTIDASE"/>
    <property type="match status" value="1"/>
</dbReference>
<gene>
    <name evidence="1" type="primary">pepQ</name>
    <name type="ordered locus">EcSMS35_4228</name>
</gene>
<keyword id="KW-0224">Dipeptidase</keyword>
<keyword id="KW-0378">Hydrolase</keyword>
<keyword id="KW-0464">Manganese</keyword>
<keyword id="KW-0479">Metal-binding</keyword>
<keyword id="KW-0482">Metalloprotease</keyword>
<keyword id="KW-0645">Protease</keyword>
<name>PEPQ_ECOSM</name>
<proteinExistence type="inferred from homology"/>
<reference key="1">
    <citation type="journal article" date="2008" name="J. Bacteriol.">
        <title>Insights into the environmental resistance gene pool from the genome sequence of the multidrug-resistant environmental isolate Escherichia coli SMS-3-5.</title>
        <authorList>
            <person name="Fricke W.F."/>
            <person name="Wright M.S."/>
            <person name="Lindell A.H."/>
            <person name="Harkins D.M."/>
            <person name="Baker-Austin C."/>
            <person name="Ravel J."/>
            <person name="Stepanauskas R."/>
        </authorList>
    </citation>
    <scope>NUCLEOTIDE SEQUENCE [LARGE SCALE GENOMIC DNA]</scope>
    <source>
        <strain>SMS-3-5 / SECEC</strain>
    </source>
</reference>
<protein>
    <recommendedName>
        <fullName evidence="1">Xaa-Pro dipeptidase</fullName>
        <shortName evidence="1">X-Pro dipeptidase</shortName>
        <ecNumber evidence="1">3.4.13.9</ecNumber>
    </recommendedName>
    <alternativeName>
        <fullName evidence="1">Imidodipeptidase</fullName>
    </alternativeName>
    <alternativeName>
        <fullName evidence="1">Proline dipeptidase</fullName>
        <shortName evidence="1">Prolidase</shortName>
    </alternativeName>
</protein>
<evidence type="ECO:0000255" key="1">
    <source>
        <dbReference type="HAMAP-Rule" id="MF_01279"/>
    </source>
</evidence>
<organism>
    <name type="scientific">Escherichia coli (strain SMS-3-5 / SECEC)</name>
    <dbReference type="NCBI Taxonomy" id="439855"/>
    <lineage>
        <taxon>Bacteria</taxon>
        <taxon>Pseudomonadati</taxon>
        <taxon>Pseudomonadota</taxon>
        <taxon>Gammaproteobacteria</taxon>
        <taxon>Enterobacterales</taxon>
        <taxon>Enterobacteriaceae</taxon>
        <taxon>Escherichia</taxon>
    </lineage>
</organism>
<sequence>MESLASLYKNHIATLQERTRDALARFKLDALLIHSGELFNVFLDDHPYPFKVNPQFKAWVPVTQVPNCWLLVDGVNKPKLWFYLPVDYWHNVEPLPNSFWTEDVEVIALPKADGIGSLLPAARGNIGYIGPVPERALQLGIEASNINPKGVIDYLHYYRSFKTEYELACMREAQKMAVNGHRAAEEAFRSGMSEFDINIAYLTATGHRDTDVPYSNIVALNEHAAVLHYTKLDHQAPEEMRSFLLDAGAEYNGYAADLTRTWSAKSDNDYAQLVKDVNDEQLALIATMKAGVSYVDYHIQFHQRIAKLLRKHQIITDMSEEAMVENDLTGPFMPHGIGHPLGLQVHDVAGFMQDDSGTHLAAPAKYPYLRCTRILQPGMVLTIEPGIYFIESLLAPWREGQFSKHFNWQKIEALKPFGGIRIEDNVVIHENNVENMTRDLKLA</sequence>